<feature type="chain" id="PRO_0000314224" description="UPF0391 membrane protein ESA_03375">
    <location>
        <begin position="1"/>
        <end position="53"/>
    </location>
</feature>
<feature type="transmembrane region" description="Helical" evidence="1">
    <location>
        <begin position="4"/>
        <end position="24"/>
    </location>
</feature>
<feature type="transmembrane region" description="Helical" evidence="1">
    <location>
        <begin position="28"/>
        <end position="48"/>
    </location>
</feature>
<comment type="subcellular location">
    <subcellularLocation>
        <location evidence="1">Cell membrane</location>
        <topology evidence="1">Multi-pass membrane protein</topology>
    </subcellularLocation>
</comment>
<comment type="similarity">
    <text evidence="1">Belongs to the UPF0391 family.</text>
</comment>
<comment type="sequence caution" evidence="2">
    <conflict type="erroneous initiation">
        <sequence resource="EMBL-CDS" id="ABU78596"/>
    </conflict>
</comment>
<organism>
    <name type="scientific">Cronobacter sakazakii (strain ATCC BAA-894)</name>
    <name type="common">Enterobacter sakazakii</name>
    <dbReference type="NCBI Taxonomy" id="290339"/>
    <lineage>
        <taxon>Bacteria</taxon>
        <taxon>Pseudomonadati</taxon>
        <taxon>Pseudomonadota</taxon>
        <taxon>Gammaproteobacteria</taxon>
        <taxon>Enterobacterales</taxon>
        <taxon>Enterobacteriaceae</taxon>
        <taxon>Cronobacter</taxon>
    </lineage>
</organism>
<name>Y3375_CROS8</name>
<keyword id="KW-1003">Cell membrane</keyword>
<keyword id="KW-0472">Membrane</keyword>
<keyword id="KW-1185">Reference proteome</keyword>
<keyword id="KW-0812">Transmembrane</keyword>
<keyword id="KW-1133">Transmembrane helix</keyword>
<reference key="1">
    <citation type="journal article" date="2010" name="PLoS ONE">
        <title>Genome sequence of Cronobacter sakazakii BAA-894 and comparative genomic hybridization analysis with other Cronobacter species.</title>
        <authorList>
            <person name="Kucerova E."/>
            <person name="Clifton S.W."/>
            <person name="Xia X.Q."/>
            <person name="Long F."/>
            <person name="Porwollik S."/>
            <person name="Fulton L."/>
            <person name="Fronick C."/>
            <person name="Minx P."/>
            <person name="Kyung K."/>
            <person name="Warren W."/>
            <person name="Fulton R."/>
            <person name="Feng D."/>
            <person name="Wollam A."/>
            <person name="Shah N."/>
            <person name="Bhonagiri V."/>
            <person name="Nash W.E."/>
            <person name="Hallsworth-Pepin K."/>
            <person name="Wilson R.K."/>
            <person name="McClelland M."/>
            <person name="Forsythe S.J."/>
        </authorList>
    </citation>
    <scope>NUCLEOTIDE SEQUENCE [LARGE SCALE GENOMIC DNA]</scope>
    <source>
        <strain>ATCC BAA-894</strain>
    </source>
</reference>
<dbReference type="EMBL" id="CP000783">
    <property type="protein sequence ID" value="ABU78596.1"/>
    <property type="status" value="ALT_INIT"/>
    <property type="molecule type" value="Genomic_DNA"/>
</dbReference>
<dbReference type="RefSeq" id="WP_002437547.1">
    <property type="nucleotide sequence ID" value="NC_009778.1"/>
</dbReference>
<dbReference type="KEGG" id="esa:ESA_03375"/>
<dbReference type="HOGENOM" id="CLU_187346_2_0_6"/>
<dbReference type="Proteomes" id="UP000000260">
    <property type="component" value="Chromosome"/>
</dbReference>
<dbReference type="GO" id="GO:0005886">
    <property type="term" value="C:plasma membrane"/>
    <property type="evidence" value="ECO:0007669"/>
    <property type="project" value="UniProtKB-SubCell"/>
</dbReference>
<dbReference type="HAMAP" id="MF_01361">
    <property type="entry name" value="UPF0391"/>
    <property type="match status" value="1"/>
</dbReference>
<dbReference type="InterPro" id="IPR009760">
    <property type="entry name" value="DUF1328"/>
</dbReference>
<dbReference type="NCBIfam" id="NF010229">
    <property type="entry name" value="PRK13682.1-4"/>
    <property type="match status" value="1"/>
</dbReference>
<dbReference type="NCBIfam" id="NF010230">
    <property type="entry name" value="PRK13682.1-5"/>
    <property type="match status" value="1"/>
</dbReference>
<dbReference type="Pfam" id="PF07043">
    <property type="entry name" value="DUF1328"/>
    <property type="match status" value="1"/>
</dbReference>
<dbReference type="PIRSF" id="PIRSF036466">
    <property type="entry name" value="UCP036466"/>
    <property type="match status" value="1"/>
</dbReference>
<gene>
    <name type="ordered locus">ESA_03375</name>
</gene>
<evidence type="ECO:0000255" key="1">
    <source>
        <dbReference type="HAMAP-Rule" id="MF_01361"/>
    </source>
</evidence>
<evidence type="ECO:0000305" key="2"/>
<sequence>MFRWGIIFLVIALIAAALGFGGLAGTAAGAAKIVFVVGIILFLVSLFMGRRRP</sequence>
<accession>A7MGB5</accession>
<proteinExistence type="inferred from homology"/>
<protein>
    <recommendedName>
        <fullName evidence="1">UPF0391 membrane protein ESA_03375</fullName>
    </recommendedName>
</protein>